<keyword id="KW-0143">Chaperone</keyword>
<keyword id="KW-0963">Cytoplasm</keyword>
<keyword id="KW-1185">Reference proteome</keyword>
<comment type="function">
    <text evidence="1">An FAD assembly protein, which accelerates covalent attachment of the cofactor into other proteins. Plays an essential role in the assembly of succinate dehydrogenase (SDH, respiratory complex II), an enzyme complex that is a component of both the tricarboxylic acid cycle and the electron transport chain, and which couples the oxidation of succinate to fumarate with the reduction of ubiquinone (coenzyme Q) to ubiquinol. Required for flavinylation (covalent attachment of FAD) of the flavoprotein subunit SdhA of SDH and other flavinylated proteins as well.</text>
</comment>
<comment type="subcellular location">
    <subcellularLocation>
        <location evidence="1">Cytoplasm</location>
    </subcellularLocation>
</comment>
<comment type="similarity">
    <text evidence="2">Belongs to the SdhE FAD assembly factor family.</text>
</comment>
<sequence>MRYCRCQRATAEEPTMDKPAELNKLRWRSRRGMRELDHLFDRYLSHCWAQASEAERGVFLRFLDCEDDKLWRWLMGYEVCQDASFAALIVTMRALPA</sequence>
<feature type="chain" id="PRO_0000214436" description="FAD assembly factor SdhE">
    <location>
        <begin position="1"/>
        <end position="97"/>
    </location>
</feature>
<dbReference type="EMBL" id="AE009442">
    <property type="protein sequence ID" value="AAO28234.1"/>
    <property type="molecule type" value="Genomic_DNA"/>
</dbReference>
<dbReference type="SMR" id="Q87EF7"/>
<dbReference type="KEGG" id="xft:PD_0354"/>
<dbReference type="HOGENOM" id="CLU_103054_2_1_6"/>
<dbReference type="Proteomes" id="UP000002516">
    <property type="component" value="Chromosome"/>
</dbReference>
<dbReference type="GO" id="GO:0005737">
    <property type="term" value="C:cytoplasm"/>
    <property type="evidence" value="ECO:0007669"/>
    <property type="project" value="UniProtKB-SubCell"/>
</dbReference>
<dbReference type="GO" id="GO:0006105">
    <property type="term" value="P:succinate metabolic process"/>
    <property type="evidence" value="ECO:0007669"/>
    <property type="project" value="TreeGrafter"/>
</dbReference>
<dbReference type="Gene3D" id="1.10.150.250">
    <property type="entry name" value="Flavinator of succinate dehydrogenase"/>
    <property type="match status" value="1"/>
</dbReference>
<dbReference type="InterPro" id="IPR005631">
    <property type="entry name" value="SDH"/>
</dbReference>
<dbReference type="InterPro" id="IPR036714">
    <property type="entry name" value="SDH_sf"/>
</dbReference>
<dbReference type="InterPro" id="IPR050531">
    <property type="entry name" value="SdhE_FAD_assembly_factor"/>
</dbReference>
<dbReference type="PANTHER" id="PTHR39585">
    <property type="entry name" value="FAD ASSEMBLY FACTOR SDHE"/>
    <property type="match status" value="1"/>
</dbReference>
<dbReference type="PANTHER" id="PTHR39585:SF1">
    <property type="entry name" value="FAD ASSEMBLY FACTOR SDHE"/>
    <property type="match status" value="1"/>
</dbReference>
<dbReference type="Pfam" id="PF03937">
    <property type="entry name" value="Sdh5"/>
    <property type="match status" value="1"/>
</dbReference>
<dbReference type="SUPFAM" id="SSF109910">
    <property type="entry name" value="YgfY-like"/>
    <property type="match status" value="1"/>
</dbReference>
<accession>Q87EF7</accession>
<proteinExistence type="inferred from homology"/>
<name>SDHE_XYLFT</name>
<evidence type="ECO:0000250" key="1">
    <source>
        <dbReference type="UniProtKB" id="G4V4G2"/>
    </source>
</evidence>
<evidence type="ECO:0000305" key="2"/>
<reference key="1">
    <citation type="journal article" date="2003" name="J. Bacteriol.">
        <title>Comparative analyses of the complete genome sequences of Pierce's disease and citrus variegated chlorosis strains of Xylella fastidiosa.</title>
        <authorList>
            <person name="Van Sluys M.A."/>
            <person name="de Oliveira M.C."/>
            <person name="Monteiro-Vitorello C.B."/>
            <person name="Miyaki C.Y."/>
            <person name="Furlan L.R."/>
            <person name="Camargo L.E.A."/>
            <person name="da Silva A.C.R."/>
            <person name="Moon D.H."/>
            <person name="Takita M.A."/>
            <person name="Lemos E.G.M."/>
            <person name="Machado M.A."/>
            <person name="Ferro M.I.T."/>
            <person name="da Silva F.R."/>
            <person name="Goldman M.H.S."/>
            <person name="Goldman G.H."/>
            <person name="Lemos M.V.F."/>
            <person name="El-Dorry H."/>
            <person name="Tsai S.M."/>
            <person name="Carrer H."/>
            <person name="Carraro D.M."/>
            <person name="de Oliveira R.C."/>
            <person name="Nunes L.R."/>
            <person name="Siqueira W.J."/>
            <person name="Coutinho L.L."/>
            <person name="Kimura E.T."/>
            <person name="Ferro E.S."/>
            <person name="Harakava R."/>
            <person name="Kuramae E.E."/>
            <person name="Marino C.L."/>
            <person name="Giglioti E."/>
            <person name="Abreu I.L."/>
            <person name="Alves L.M.C."/>
            <person name="do Amaral A.M."/>
            <person name="Baia G.S."/>
            <person name="Blanco S.R."/>
            <person name="Brito M.S."/>
            <person name="Cannavan F.S."/>
            <person name="Celestino A.V."/>
            <person name="da Cunha A.F."/>
            <person name="Fenille R.C."/>
            <person name="Ferro J.A."/>
            <person name="Formighieri E.F."/>
            <person name="Kishi L.T."/>
            <person name="Leoni S.G."/>
            <person name="Oliveira A.R."/>
            <person name="Rosa V.E. Jr."/>
            <person name="Sassaki F.T."/>
            <person name="Sena J.A.D."/>
            <person name="de Souza A.A."/>
            <person name="Truffi D."/>
            <person name="Tsukumo F."/>
            <person name="Yanai G.M."/>
            <person name="Zaros L.G."/>
            <person name="Civerolo E.L."/>
            <person name="Simpson A.J.G."/>
            <person name="Almeida N.F. Jr."/>
            <person name="Setubal J.C."/>
            <person name="Kitajima J.P."/>
        </authorList>
    </citation>
    <scope>NUCLEOTIDE SEQUENCE [LARGE SCALE GENOMIC DNA]</scope>
    <source>
        <strain>Temecula1 / ATCC 700964</strain>
    </source>
</reference>
<organism>
    <name type="scientific">Xylella fastidiosa (strain Temecula1 / ATCC 700964)</name>
    <dbReference type="NCBI Taxonomy" id="183190"/>
    <lineage>
        <taxon>Bacteria</taxon>
        <taxon>Pseudomonadati</taxon>
        <taxon>Pseudomonadota</taxon>
        <taxon>Gammaproteobacteria</taxon>
        <taxon>Lysobacterales</taxon>
        <taxon>Lysobacteraceae</taxon>
        <taxon>Xylella</taxon>
    </lineage>
</organism>
<protein>
    <recommendedName>
        <fullName>FAD assembly factor SdhE</fullName>
    </recommendedName>
</protein>
<gene>
    <name type="primary">sdhE</name>
    <name type="ordered locus">PD_0354</name>
</gene>